<accession>Q8RHH9</accession>
<dbReference type="EMBL" id="AE009951">
    <property type="protein sequence ID" value="AAL94128.1"/>
    <property type="molecule type" value="Genomic_DNA"/>
</dbReference>
<dbReference type="RefSeq" id="NP_602829.1">
    <property type="nucleotide sequence ID" value="NC_003454.1"/>
</dbReference>
<dbReference type="RefSeq" id="WP_005904076.1">
    <property type="nucleotide sequence ID" value="NZ_OZ209243.1"/>
</dbReference>
<dbReference type="SMR" id="Q8RHH9"/>
<dbReference type="FunCoup" id="Q8RHH9">
    <property type="interactions" value="156"/>
</dbReference>
<dbReference type="STRING" id="190304.FN2044"/>
<dbReference type="PaxDb" id="190304-FN2044"/>
<dbReference type="EnsemblBacteria" id="AAL94128">
    <property type="protein sequence ID" value="AAL94128"/>
    <property type="gene ID" value="FN2044"/>
</dbReference>
<dbReference type="GeneID" id="93327734"/>
<dbReference type="KEGG" id="fnu:FN2044"/>
<dbReference type="PATRIC" id="fig|190304.8.peg.506"/>
<dbReference type="eggNOG" id="COG0267">
    <property type="taxonomic scope" value="Bacteria"/>
</dbReference>
<dbReference type="HOGENOM" id="CLU_190949_3_0_0"/>
<dbReference type="InParanoid" id="Q8RHH9"/>
<dbReference type="BioCyc" id="FNUC190304:G1FZS-531-MONOMER"/>
<dbReference type="Proteomes" id="UP000002521">
    <property type="component" value="Chromosome"/>
</dbReference>
<dbReference type="GO" id="GO:0005737">
    <property type="term" value="C:cytoplasm"/>
    <property type="evidence" value="ECO:0007669"/>
    <property type="project" value="UniProtKB-ARBA"/>
</dbReference>
<dbReference type="GO" id="GO:1990904">
    <property type="term" value="C:ribonucleoprotein complex"/>
    <property type="evidence" value="ECO:0007669"/>
    <property type="project" value="UniProtKB-KW"/>
</dbReference>
<dbReference type="GO" id="GO:0005840">
    <property type="term" value="C:ribosome"/>
    <property type="evidence" value="ECO:0007669"/>
    <property type="project" value="UniProtKB-KW"/>
</dbReference>
<dbReference type="GO" id="GO:0003735">
    <property type="term" value="F:structural constituent of ribosome"/>
    <property type="evidence" value="ECO:0007669"/>
    <property type="project" value="InterPro"/>
</dbReference>
<dbReference type="GO" id="GO:0006412">
    <property type="term" value="P:translation"/>
    <property type="evidence" value="ECO:0007669"/>
    <property type="project" value="UniProtKB-UniRule"/>
</dbReference>
<dbReference type="Gene3D" id="2.20.28.120">
    <property type="entry name" value="Ribosomal protein L33"/>
    <property type="match status" value="1"/>
</dbReference>
<dbReference type="HAMAP" id="MF_00294">
    <property type="entry name" value="Ribosomal_bL33"/>
    <property type="match status" value="1"/>
</dbReference>
<dbReference type="InterPro" id="IPR001705">
    <property type="entry name" value="Ribosomal_bL33"/>
</dbReference>
<dbReference type="InterPro" id="IPR038584">
    <property type="entry name" value="Ribosomal_bL33_sf"/>
</dbReference>
<dbReference type="InterPro" id="IPR011332">
    <property type="entry name" value="Ribosomal_zn-bd"/>
</dbReference>
<dbReference type="NCBIfam" id="NF001764">
    <property type="entry name" value="PRK00504.1"/>
    <property type="match status" value="1"/>
</dbReference>
<dbReference type="NCBIfam" id="NF001860">
    <property type="entry name" value="PRK00595.1"/>
    <property type="match status" value="1"/>
</dbReference>
<dbReference type="NCBIfam" id="TIGR01023">
    <property type="entry name" value="rpmG_bact"/>
    <property type="match status" value="1"/>
</dbReference>
<dbReference type="PANTHER" id="PTHR43168">
    <property type="entry name" value="50S RIBOSOMAL PROTEIN L33, CHLOROPLASTIC"/>
    <property type="match status" value="1"/>
</dbReference>
<dbReference type="PANTHER" id="PTHR43168:SF2">
    <property type="entry name" value="LARGE RIBOSOMAL SUBUNIT PROTEIN BL33C"/>
    <property type="match status" value="1"/>
</dbReference>
<dbReference type="Pfam" id="PF00471">
    <property type="entry name" value="Ribosomal_L33"/>
    <property type="match status" value="1"/>
</dbReference>
<dbReference type="SUPFAM" id="SSF57829">
    <property type="entry name" value="Zn-binding ribosomal proteins"/>
    <property type="match status" value="1"/>
</dbReference>
<proteinExistence type="inferred from homology"/>
<gene>
    <name evidence="1" type="primary">rpmG</name>
    <name type="ordered locus">FN2044</name>
</gene>
<name>RL33_FUSNN</name>
<feature type="chain" id="PRO_0000170165" description="Large ribosomal subunit protein bL33">
    <location>
        <begin position="1"/>
        <end position="50"/>
    </location>
</feature>
<protein>
    <recommendedName>
        <fullName evidence="1">Large ribosomal subunit protein bL33</fullName>
    </recommendedName>
    <alternativeName>
        <fullName evidence="2">50S ribosomal protein L33</fullName>
    </alternativeName>
</protein>
<comment type="similarity">
    <text evidence="1">Belongs to the bacterial ribosomal protein bL33 family.</text>
</comment>
<reference key="1">
    <citation type="journal article" date="2002" name="J. Bacteriol.">
        <title>Genome sequence and analysis of the oral bacterium Fusobacterium nucleatum strain ATCC 25586.</title>
        <authorList>
            <person name="Kapatral V."/>
            <person name="Anderson I."/>
            <person name="Ivanova N."/>
            <person name="Reznik G."/>
            <person name="Los T."/>
            <person name="Lykidis A."/>
            <person name="Bhattacharyya A."/>
            <person name="Bartman A."/>
            <person name="Gardner W."/>
            <person name="Grechkin G."/>
            <person name="Zhu L."/>
            <person name="Vasieva O."/>
            <person name="Chu L."/>
            <person name="Kogan Y."/>
            <person name="Chaga O."/>
            <person name="Goltsman E."/>
            <person name="Bernal A."/>
            <person name="Larsen N."/>
            <person name="D'Souza M."/>
            <person name="Walunas T."/>
            <person name="Pusch G."/>
            <person name="Haselkorn R."/>
            <person name="Fonstein M."/>
            <person name="Kyrpides N.C."/>
            <person name="Overbeek R."/>
        </authorList>
    </citation>
    <scope>NUCLEOTIDE SEQUENCE [LARGE SCALE GENOMIC DNA]</scope>
    <source>
        <strain>ATCC 25586 / DSM 15643 / BCRC 10681 / CIP 101130 / JCM 8532 / KCTC 2640 / LMG 13131 / VPI 4355</strain>
    </source>
</reference>
<organism>
    <name type="scientific">Fusobacterium nucleatum subsp. nucleatum (strain ATCC 25586 / DSM 15643 / BCRC 10681 / CIP 101130 / JCM 8532 / KCTC 2640 / LMG 13131 / VPI 4355)</name>
    <dbReference type="NCBI Taxonomy" id="190304"/>
    <lineage>
        <taxon>Bacteria</taxon>
        <taxon>Fusobacteriati</taxon>
        <taxon>Fusobacteriota</taxon>
        <taxon>Fusobacteriia</taxon>
        <taxon>Fusobacteriales</taxon>
        <taxon>Fusobacteriaceae</taxon>
        <taxon>Fusobacterium</taxon>
    </lineage>
</organism>
<sequence length="50" mass="6147">MRVQVILECTETKLRHYTTTKNKKTHPERLEMMKYNPVLKKHTLYKETKK</sequence>
<evidence type="ECO:0000255" key="1">
    <source>
        <dbReference type="HAMAP-Rule" id="MF_00294"/>
    </source>
</evidence>
<evidence type="ECO:0000305" key="2"/>
<keyword id="KW-1185">Reference proteome</keyword>
<keyword id="KW-0687">Ribonucleoprotein</keyword>
<keyword id="KW-0689">Ribosomal protein</keyword>